<reference key="1">
    <citation type="journal article" date="2009" name="PLoS ONE">
        <title>Salmonella paratyphi C: genetic divergence from Salmonella choleraesuis and pathogenic convergence with Salmonella typhi.</title>
        <authorList>
            <person name="Liu W.-Q."/>
            <person name="Feng Y."/>
            <person name="Wang Y."/>
            <person name="Zou Q.-H."/>
            <person name="Chen F."/>
            <person name="Guo J.-T."/>
            <person name="Peng Y.-H."/>
            <person name="Jin Y."/>
            <person name="Li Y.-G."/>
            <person name="Hu S.-N."/>
            <person name="Johnston R.N."/>
            <person name="Liu G.-R."/>
            <person name="Liu S.-L."/>
        </authorList>
    </citation>
    <scope>NUCLEOTIDE SEQUENCE [LARGE SCALE GENOMIC DNA]</scope>
    <source>
        <strain>RKS4594</strain>
    </source>
</reference>
<protein>
    <recommendedName>
        <fullName evidence="1">Leucine--tRNA ligase</fullName>
        <ecNumber evidence="1">6.1.1.4</ecNumber>
    </recommendedName>
    <alternativeName>
        <fullName evidence="1">Leucyl-tRNA synthetase</fullName>
        <shortName evidence="1">LeuRS</shortName>
    </alternativeName>
</protein>
<organism>
    <name type="scientific">Salmonella paratyphi C (strain RKS4594)</name>
    <dbReference type="NCBI Taxonomy" id="476213"/>
    <lineage>
        <taxon>Bacteria</taxon>
        <taxon>Pseudomonadati</taxon>
        <taxon>Pseudomonadota</taxon>
        <taxon>Gammaproteobacteria</taxon>
        <taxon>Enterobacterales</taxon>
        <taxon>Enterobacteriaceae</taxon>
        <taxon>Salmonella</taxon>
    </lineage>
</organism>
<dbReference type="EC" id="6.1.1.4" evidence="1"/>
<dbReference type="EMBL" id="CP000857">
    <property type="protein sequence ID" value="ACN44841.1"/>
    <property type="molecule type" value="Genomic_DNA"/>
</dbReference>
<dbReference type="RefSeq" id="WP_001157916.1">
    <property type="nucleotide sequence ID" value="NC_012125.1"/>
</dbReference>
<dbReference type="SMR" id="C0PW78"/>
<dbReference type="KEGG" id="sei:SPC_0664"/>
<dbReference type="HOGENOM" id="CLU_004427_0_0_6"/>
<dbReference type="Proteomes" id="UP000001599">
    <property type="component" value="Chromosome"/>
</dbReference>
<dbReference type="GO" id="GO:0005829">
    <property type="term" value="C:cytosol"/>
    <property type="evidence" value="ECO:0007669"/>
    <property type="project" value="TreeGrafter"/>
</dbReference>
<dbReference type="GO" id="GO:0002161">
    <property type="term" value="F:aminoacyl-tRNA deacylase activity"/>
    <property type="evidence" value="ECO:0007669"/>
    <property type="project" value="InterPro"/>
</dbReference>
<dbReference type="GO" id="GO:0005524">
    <property type="term" value="F:ATP binding"/>
    <property type="evidence" value="ECO:0007669"/>
    <property type="project" value="UniProtKB-UniRule"/>
</dbReference>
<dbReference type="GO" id="GO:0004823">
    <property type="term" value="F:leucine-tRNA ligase activity"/>
    <property type="evidence" value="ECO:0007669"/>
    <property type="project" value="UniProtKB-UniRule"/>
</dbReference>
<dbReference type="GO" id="GO:0006429">
    <property type="term" value="P:leucyl-tRNA aminoacylation"/>
    <property type="evidence" value="ECO:0007669"/>
    <property type="project" value="UniProtKB-UniRule"/>
</dbReference>
<dbReference type="CDD" id="cd07958">
    <property type="entry name" value="Anticodon_Ia_Leu_BEm"/>
    <property type="match status" value="1"/>
</dbReference>
<dbReference type="CDD" id="cd00812">
    <property type="entry name" value="LeuRS_core"/>
    <property type="match status" value="1"/>
</dbReference>
<dbReference type="FunFam" id="1.10.730.10:FF:000002">
    <property type="entry name" value="Leucine--tRNA ligase"/>
    <property type="match status" value="2"/>
</dbReference>
<dbReference type="FunFam" id="2.20.28.290:FF:000001">
    <property type="entry name" value="Leucine--tRNA ligase"/>
    <property type="match status" value="1"/>
</dbReference>
<dbReference type="FunFam" id="3.10.20.590:FF:000001">
    <property type="entry name" value="Leucine--tRNA ligase"/>
    <property type="match status" value="1"/>
</dbReference>
<dbReference type="FunFam" id="3.40.50.620:FF:000003">
    <property type="entry name" value="Leucine--tRNA ligase"/>
    <property type="match status" value="1"/>
</dbReference>
<dbReference type="FunFam" id="3.40.50.620:FF:000124">
    <property type="entry name" value="Leucine--tRNA ligase"/>
    <property type="match status" value="1"/>
</dbReference>
<dbReference type="FunFam" id="3.90.740.10:FF:000012">
    <property type="entry name" value="Leucine--tRNA ligase"/>
    <property type="match status" value="1"/>
</dbReference>
<dbReference type="Gene3D" id="2.20.28.290">
    <property type="match status" value="1"/>
</dbReference>
<dbReference type="Gene3D" id="3.10.20.590">
    <property type="match status" value="1"/>
</dbReference>
<dbReference type="Gene3D" id="3.40.50.620">
    <property type="entry name" value="HUPs"/>
    <property type="match status" value="2"/>
</dbReference>
<dbReference type="Gene3D" id="1.10.730.10">
    <property type="entry name" value="Isoleucyl-tRNA Synthetase, Domain 1"/>
    <property type="match status" value="2"/>
</dbReference>
<dbReference type="HAMAP" id="MF_00049_B">
    <property type="entry name" value="Leu_tRNA_synth_B"/>
    <property type="match status" value="1"/>
</dbReference>
<dbReference type="InterPro" id="IPR001412">
    <property type="entry name" value="aa-tRNA-synth_I_CS"/>
</dbReference>
<dbReference type="InterPro" id="IPR002300">
    <property type="entry name" value="aa-tRNA-synth_Ia"/>
</dbReference>
<dbReference type="InterPro" id="IPR002302">
    <property type="entry name" value="Leu-tRNA-ligase"/>
</dbReference>
<dbReference type="InterPro" id="IPR025709">
    <property type="entry name" value="Leu_tRNA-synth_edit"/>
</dbReference>
<dbReference type="InterPro" id="IPR013155">
    <property type="entry name" value="M/V/L/I-tRNA-synth_anticd-bd"/>
</dbReference>
<dbReference type="InterPro" id="IPR015413">
    <property type="entry name" value="Methionyl/Leucyl_tRNA_Synth"/>
</dbReference>
<dbReference type="InterPro" id="IPR014729">
    <property type="entry name" value="Rossmann-like_a/b/a_fold"/>
</dbReference>
<dbReference type="InterPro" id="IPR009080">
    <property type="entry name" value="tRNAsynth_Ia_anticodon-bd"/>
</dbReference>
<dbReference type="InterPro" id="IPR009008">
    <property type="entry name" value="Val/Leu/Ile-tRNA-synth_edit"/>
</dbReference>
<dbReference type="NCBIfam" id="TIGR00396">
    <property type="entry name" value="leuS_bact"/>
    <property type="match status" value="1"/>
</dbReference>
<dbReference type="PANTHER" id="PTHR43740:SF2">
    <property type="entry name" value="LEUCINE--TRNA LIGASE, MITOCHONDRIAL"/>
    <property type="match status" value="1"/>
</dbReference>
<dbReference type="PANTHER" id="PTHR43740">
    <property type="entry name" value="LEUCYL-TRNA SYNTHETASE"/>
    <property type="match status" value="1"/>
</dbReference>
<dbReference type="Pfam" id="PF08264">
    <property type="entry name" value="Anticodon_1"/>
    <property type="match status" value="1"/>
</dbReference>
<dbReference type="Pfam" id="PF00133">
    <property type="entry name" value="tRNA-synt_1"/>
    <property type="match status" value="2"/>
</dbReference>
<dbReference type="Pfam" id="PF13603">
    <property type="entry name" value="tRNA-synt_1_2"/>
    <property type="match status" value="1"/>
</dbReference>
<dbReference type="Pfam" id="PF09334">
    <property type="entry name" value="tRNA-synt_1g"/>
    <property type="match status" value="1"/>
</dbReference>
<dbReference type="PRINTS" id="PR00985">
    <property type="entry name" value="TRNASYNTHLEU"/>
</dbReference>
<dbReference type="SUPFAM" id="SSF47323">
    <property type="entry name" value="Anticodon-binding domain of a subclass of class I aminoacyl-tRNA synthetases"/>
    <property type="match status" value="1"/>
</dbReference>
<dbReference type="SUPFAM" id="SSF52374">
    <property type="entry name" value="Nucleotidylyl transferase"/>
    <property type="match status" value="1"/>
</dbReference>
<dbReference type="SUPFAM" id="SSF50677">
    <property type="entry name" value="ValRS/IleRS/LeuRS editing domain"/>
    <property type="match status" value="1"/>
</dbReference>
<dbReference type="PROSITE" id="PS00178">
    <property type="entry name" value="AA_TRNA_LIGASE_I"/>
    <property type="match status" value="1"/>
</dbReference>
<gene>
    <name evidence="1" type="primary">leuS</name>
    <name type="ordered locus">SPC_0664</name>
</gene>
<feature type="chain" id="PRO_1000199222" description="Leucine--tRNA ligase">
    <location>
        <begin position="1"/>
        <end position="860"/>
    </location>
</feature>
<feature type="short sequence motif" description="'HIGH' region">
    <location>
        <begin position="42"/>
        <end position="52"/>
    </location>
</feature>
<feature type="short sequence motif" description="'KMSKS' region">
    <location>
        <begin position="619"/>
        <end position="623"/>
    </location>
</feature>
<feature type="binding site" evidence="1">
    <location>
        <position position="622"/>
    </location>
    <ligand>
        <name>ATP</name>
        <dbReference type="ChEBI" id="CHEBI:30616"/>
    </ligand>
</feature>
<name>SYL_SALPC</name>
<proteinExistence type="inferred from homology"/>
<sequence>MQEQYRPEEIESKVQLHWDEKRTFEVTEDESKEKYYCLSMLPYPSGRLHMGHVRNYTIGDVVARYQRMLGKNVLQPIGWDAFGLPAEGAAVKNNTAPAPWTYDNIAYMKNQLKTLGFGYDWSREIATCTPEYYRWEQKFFTELYKKGLVYKKTSAVNWCPNDQTVLANEQVIDGCCWRCDTKVERKEIPQWFIKITAYADELLRDLDKLDHWPDTVKTMQRNWIGRSEGVEITFDVKGYDNTLTVYTTRPDTFMGATYLAVAAGHPLAQKAAANNAELAAFIDECRNTKVAEAEMATMEKKGVDTGYKAIHPLTGEEIPVWAANFVLMEYGTGAVMAVPGHDQRDYEFASKYGLTIKPVILAADGSEPDLSEQALTEKGVLFNSGEFDGLAFEAAFNAIADKLAEKGVGERKVNYRLRDWGVSRQRYWGAPIPMVTLEDGTVLPTPEDQLPVILPEDVVMDGITSPIKADPEWAKTTVNGMPALRETDTFDTFMESSWYYARYTCPQYQEGMLDSKAANYWLPVDIYIGGIEHAIMHLLYFRFFHKLMRDAGMVTSDEPAKQLLCQGMVLADAFYYVGENGERNWVSPVDAIVERDEKGRIVKAKDAAGHELVYTGMSKMSKSKNNGIDPQVMVERYGADTVRLFMMFASPADMTLEWQESGVEGANRFIKRVWKLVYEHTAKGPVAALNVDALSEDQKALRRDVHKTIAKVTDDIGRRQTFNTAIAAIMELMNKLAKAPQEGEQDRALLQEALQAVVRMLNPFTPHVCFTLWQELGGEGDIDNAPWPVADEQAMVENTTLVVVQVNGKVRGKITVAVDATEEQVRERAGQEHLVAKYLDGVTVRKVIYVPGKLLNLVVG</sequence>
<comment type="catalytic activity">
    <reaction evidence="1">
        <text>tRNA(Leu) + L-leucine + ATP = L-leucyl-tRNA(Leu) + AMP + diphosphate</text>
        <dbReference type="Rhea" id="RHEA:11688"/>
        <dbReference type="Rhea" id="RHEA-COMP:9613"/>
        <dbReference type="Rhea" id="RHEA-COMP:9622"/>
        <dbReference type="ChEBI" id="CHEBI:30616"/>
        <dbReference type="ChEBI" id="CHEBI:33019"/>
        <dbReference type="ChEBI" id="CHEBI:57427"/>
        <dbReference type="ChEBI" id="CHEBI:78442"/>
        <dbReference type="ChEBI" id="CHEBI:78494"/>
        <dbReference type="ChEBI" id="CHEBI:456215"/>
        <dbReference type="EC" id="6.1.1.4"/>
    </reaction>
</comment>
<comment type="subcellular location">
    <subcellularLocation>
        <location evidence="1">Cytoplasm</location>
    </subcellularLocation>
</comment>
<comment type="similarity">
    <text evidence="1">Belongs to the class-I aminoacyl-tRNA synthetase family.</text>
</comment>
<keyword id="KW-0030">Aminoacyl-tRNA synthetase</keyword>
<keyword id="KW-0067">ATP-binding</keyword>
<keyword id="KW-0963">Cytoplasm</keyword>
<keyword id="KW-0436">Ligase</keyword>
<keyword id="KW-0547">Nucleotide-binding</keyword>
<keyword id="KW-0648">Protein biosynthesis</keyword>
<evidence type="ECO:0000255" key="1">
    <source>
        <dbReference type="HAMAP-Rule" id="MF_00049"/>
    </source>
</evidence>
<accession>C0PW78</accession>